<evidence type="ECO:0000250" key="1"/>
<evidence type="ECO:0000305" key="2"/>
<accession>P28342</accession>
<dbReference type="EC" id="2.5.1.18"/>
<dbReference type="EMBL" id="M64268">
    <property type="protein sequence ID" value="AAA33277.1"/>
    <property type="molecule type" value="mRNA"/>
</dbReference>
<dbReference type="EMBL" id="X58390">
    <property type="protein sequence ID" value="CAA41279.1"/>
    <property type="molecule type" value="mRNA"/>
</dbReference>
<dbReference type="EMBL" id="L05915">
    <property type="protein sequence ID" value="AAA72320.1"/>
    <property type="molecule type" value="Genomic_DNA"/>
</dbReference>
<dbReference type="PIR" id="S16604">
    <property type="entry name" value="S16604"/>
</dbReference>
<dbReference type="PIR" id="S33628">
    <property type="entry name" value="S33628"/>
</dbReference>
<dbReference type="SMR" id="P28342"/>
<dbReference type="GO" id="GO:0005737">
    <property type="term" value="C:cytoplasm"/>
    <property type="evidence" value="ECO:0007669"/>
    <property type="project" value="InterPro"/>
</dbReference>
<dbReference type="GO" id="GO:0004364">
    <property type="term" value="F:glutathione transferase activity"/>
    <property type="evidence" value="ECO:0007669"/>
    <property type="project" value="UniProtKB-EC"/>
</dbReference>
<dbReference type="GO" id="GO:0016034">
    <property type="term" value="F:maleylacetoacetate isomerase activity"/>
    <property type="evidence" value="ECO:0007669"/>
    <property type="project" value="TreeGrafter"/>
</dbReference>
<dbReference type="GO" id="GO:0006749">
    <property type="term" value="P:glutathione metabolic process"/>
    <property type="evidence" value="ECO:0007669"/>
    <property type="project" value="TreeGrafter"/>
</dbReference>
<dbReference type="GO" id="GO:0006559">
    <property type="term" value="P:L-phenylalanine catabolic process"/>
    <property type="evidence" value="ECO:0007669"/>
    <property type="project" value="TreeGrafter"/>
</dbReference>
<dbReference type="CDD" id="cd03191">
    <property type="entry name" value="GST_C_Zeta"/>
    <property type="match status" value="1"/>
</dbReference>
<dbReference type="CDD" id="cd03042">
    <property type="entry name" value="GST_N_Zeta"/>
    <property type="match status" value="1"/>
</dbReference>
<dbReference type="FunFam" id="3.40.30.10:FF:000100">
    <property type="entry name" value="Glutathione S-transferase Z1"/>
    <property type="match status" value="1"/>
</dbReference>
<dbReference type="FunFam" id="1.20.1050.10:FF:000017">
    <property type="entry name" value="Maleylacetoacetate isomerase"/>
    <property type="match status" value="1"/>
</dbReference>
<dbReference type="Gene3D" id="1.20.1050.10">
    <property type="match status" value="1"/>
</dbReference>
<dbReference type="Gene3D" id="3.40.30.10">
    <property type="entry name" value="Glutaredoxin"/>
    <property type="match status" value="1"/>
</dbReference>
<dbReference type="InterPro" id="IPR010987">
    <property type="entry name" value="Glutathione-S-Trfase_C-like"/>
</dbReference>
<dbReference type="InterPro" id="IPR036282">
    <property type="entry name" value="Glutathione-S-Trfase_C_sf"/>
</dbReference>
<dbReference type="InterPro" id="IPR040079">
    <property type="entry name" value="Glutathione_S-Trfase"/>
</dbReference>
<dbReference type="InterPro" id="IPR004045">
    <property type="entry name" value="Glutathione_S-Trfase_N"/>
</dbReference>
<dbReference type="InterPro" id="IPR004046">
    <property type="entry name" value="GST_C"/>
</dbReference>
<dbReference type="InterPro" id="IPR005955">
    <property type="entry name" value="GST_Zeta"/>
</dbReference>
<dbReference type="InterPro" id="IPR034330">
    <property type="entry name" value="GST_Zeta_C"/>
</dbReference>
<dbReference type="InterPro" id="IPR034333">
    <property type="entry name" value="GST_Zeta_N"/>
</dbReference>
<dbReference type="InterPro" id="IPR036249">
    <property type="entry name" value="Thioredoxin-like_sf"/>
</dbReference>
<dbReference type="NCBIfam" id="TIGR01262">
    <property type="entry name" value="maiA"/>
    <property type="match status" value="1"/>
</dbReference>
<dbReference type="PANTHER" id="PTHR42673">
    <property type="entry name" value="MALEYLACETOACETATE ISOMERASE"/>
    <property type="match status" value="1"/>
</dbReference>
<dbReference type="PANTHER" id="PTHR42673:SF4">
    <property type="entry name" value="MALEYLACETOACETATE ISOMERASE"/>
    <property type="match status" value="1"/>
</dbReference>
<dbReference type="Pfam" id="PF14497">
    <property type="entry name" value="GST_C_3"/>
    <property type="match status" value="1"/>
</dbReference>
<dbReference type="Pfam" id="PF13417">
    <property type="entry name" value="GST_N_3"/>
    <property type="match status" value="1"/>
</dbReference>
<dbReference type="SFLD" id="SFLDS00019">
    <property type="entry name" value="Glutathione_Transferase_(cytos"/>
    <property type="match status" value="1"/>
</dbReference>
<dbReference type="SFLD" id="SFLDG00358">
    <property type="entry name" value="Main_(cytGST)"/>
    <property type="match status" value="1"/>
</dbReference>
<dbReference type="SUPFAM" id="SSF47616">
    <property type="entry name" value="GST C-terminal domain-like"/>
    <property type="match status" value="1"/>
</dbReference>
<dbReference type="SUPFAM" id="SSF52833">
    <property type="entry name" value="Thioredoxin-like"/>
    <property type="match status" value="1"/>
</dbReference>
<dbReference type="PROSITE" id="PS50405">
    <property type="entry name" value="GST_CTER"/>
    <property type="match status" value="1"/>
</dbReference>
<dbReference type="PROSITE" id="PS50404">
    <property type="entry name" value="GST_NTER"/>
    <property type="match status" value="1"/>
</dbReference>
<reference key="1">
    <citation type="journal article" date="1991" name="Plant Mol. Biol.">
        <title>An ethylene-responsive flower senescence-related gene from carnation encodes a protein homologous to glutathione S-transferases.</title>
        <authorList>
            <person name="Meyer R.C. Jr."/>
            <person name="Goldsbrough P.B."/>
            <person name="Woodson W.R."/>
        </authorList>
    </citation>
    <scope>NUCLEOTIDE SEQUENCE [MRNA]</scope>
    <source>
        <strain>cv. White Sim</strain>
        <tissue>Petal</tissue>
    </source>
</reference>
<reference key="2">
    <citation type="journal article" date="1993" name="Plant Mol. Biol.">
        <title>Characterization of an ethylene-responsive glutathione S-transferase gene cluster in carnation.</title>
        <authorList>
            <person name="Itzhaki H."/>
            <person name="Woodson W.R."/>
        </authorList>
    </citation>
    <scope>NUCLEOTIDE SEQUENCE [GENOMIC DNA]</scope>
    <source>
        <strain>cv. White Sim</strain>
        <tissue>Petal</tissue>
    </source>
</reference>
<feature type="chain" id="PRO_0000186031" description="Glutathione S-transferase 1">
    <location>
        <begin position="1"/>
        <end position="221"/>
    </location>
</feature>
<feature type="domain" description="GST N-terminal">
    <location>
        <begin position="7"/>
        <end position="88"/>
    </location>
</feature>
<feature type="domain" description="GST C-terminal">
    <location>
        <begin position="93"/>
        <end position="221"/>
    </location>
</feature>
<feature type="binding site" evidence="1">
    <location>
        <begin position="17"/>
        <end position="22"/>
    </location>
    <ligand>
        <name>glutathione</name>
        <dbReference type="ChEBI" id="CHEBI:57925"/>
    </ligand>
</feature>
<feature type="binding site" evidence="1">
    <location>
        <position position="60"/>
    </location>
    <ligand>
        <name>glutathione</name>
        <dbReference type="ChEBI" id="CHEBI:57925"/>
    </ligand>
</feature>
<feature type="binding site" evidence="1">
    <location>
        <begin position="72"/>
        <end position="73"/>
    </location>
    <ligand>
        <name>glutathione</name>
        <dbReference type="ChEBI" id="CHEBI:57925"/>
    </ligand>
</feature>
<feature type="binding site" evidence="1">
    <location>
        <position position="112"/>
    </location>
    <ligand>
        <name>glutathione</name>
        <dbReference type="ChEBI" id="CHEBI:57925"/>
    </ligand>
</feature>
<feature type="binding site" evidence="1">
    <location>
        <begin position="116"/>
        <end position="118"/>
    </location>
    <ligand>
        <name>glutathione</name>
        <dbReference type="ChEBI" id="CHEBI:57925"/>
    </ligand>
</feature>
<feature type="sequence conflict" description="In Ref. 2; AAA72320." evidence="2" ref="2">
    <location>
        <position position="187"/>
    </location>
</feature>
<organism>
    <name type="scientific">Dianthus caryophyllus</name>
    <name type="common">Carnation</name>
    <name type="synonym">Clove pink</name>
    <dbReference type="NCBI Taxonomy" id="3570"/>
    <lineage>
        <taxon>Eukaryota</taxon>
        <taxon>Viridiplantae</taxon>
        <taxon>Streptophyta</taxon>
        <taxon>Embryophyta</taxon>
        <taxon>Tracheophyta</taxon>
        <taxon>Spermatophyta</taxon>
        <taxon>Magnoliopsida</taxon>
        <taxon>eudicotyledons</taxon>
        <taxon>Gunneridae</taxon>
        <taxon>Pentapetalae</taxon>
        <taxon>Caryophyllales</taxon>
        <taxon>Caryophyllaceae</taxon>
        <taxon>Caryophylleae</taxon>
        <taxon>Dianthus</taxon>
    </lineage>
</organism>
<proteinExistence type="evidence at transcript level"/>
<protein>
    <recommendedName>
        <fullName>Glutathione S-transferase 1</fullName>
        <ecNumber>2.5.1.18</ecNumber>
    </recommendedName>
    <alternativeName>
        <fullName>GST class-zeta</fullName>
    </alternativeName>
    <alternativeName>
        <fullName>SR8</fullName>
    </alternativeName>
</protein>
<comment type="function">
    <text>Conjugation of reduced glutathione to a wide number of exogenous and endogenous hydrophobic electrophiles.</text>
</comment>
<comment type="catalytic activity">
    <reaction>
        <text>RX + glutathione = an S-substituted glutathione + a halide anion + H(+)</text>
        <dbReference type="Rhea" id="RHEA:16437"/>
        <dbReference type="ChEBI" id="CHEBI:15378"/>
        <dbReference type="ChEBI" id="CHEBI:16042"/>
        <dbReference type="ChEBI" id="CHEBI:17792"/>
        <dbReference type="ChEBI" id="CHEBI:57925"/>
        <dbReference type="ChEBI" id="CHEBI:90779"/>
        <dbReference type="EC" id="2.5.1.18"/>
    </reaction>
</comment>
<comment type="developmental stage">
    <text>Senescing flowers.</text>
</comment>
<comment type="induction">
    <text>Accumulates in response to the phytohormone ethylene.</text>
</comment>
<comment type="similarity">
    <text evidence="2">Belongs to the GST superfamily. Zeta family.</text>
</comment>
<name>GSTZ1_DIACA</name>
<keyword id="KW-0808">Transferase</keyword>
<sequence length="221" mass="24930">MSSSETQKMQLYSFSLSSCAWRVRIALHLKGLDFEYKAVDLFKGEHLTPEFLKLNPLGYVPVLVHGDIVIADSLAIIMYLEEKFPENPLLPQDLQKRALNYQAANIVTSNIQPLQNLAVLNYIEEKLGSDEKLSWAKHHIKKGFSALEKLLKGHAGKYATGDEVGLADLFLAPQIIASITGFGMDMAEFPLLKSLNDAYLKYQHFRMRCQRISPMLDEAKS</sequence>
<gene>
    <name type="primary">GST1</name>
    <name type="synonym">CARSR8</name>
</gene>